<protein>
    <recommendedName>
        <fullName>Gentisate 1,2-dioxygenase</fullName>
        <ecNumber>1.13.11.4</ecNumber>
    </recommendedName>
</protein>
<organism>
    <name type="scientific">Haloferax sp</name>
    <dbReference type="NCBI Taxonomy" id="2253"/>
    <lineage>
        <taxon>Archaea</taxon>
        <taxon>Methanobacteriati</taxon>
        <taxon>Methanobacteriota</taxon>
        <taxon>Stenosarchaea group</taxon>
        <taxon>Halobacteria</taxon>
        <taxon>Halobacteriales</taxon>
        <taxon>Haloferacaceae</taxon>
        <taxon>Haloferax</taxon>
    </lineage>
</organism>
<sequence length="358" mass="40591">MAEQEPKELLEMSTDTERLLEENDLRPLWEVEKDFGNQFGGFEADIWKWEDIQASIDAIERDVPIADLPPGFQRRVAVPVNTGYRNAISNTIYVGVQTVSPGETAPAHRHGANALRFTIDGSEDMKTVVAGEEFPMRDNDLITTPQWEWHDHVNDGDETAAWLDVLDLPLVLDSLNARNTFENHELDRQPVTKSQGYWESQYGRARPFEDTKEDGIPGPFEGNCAATPPYRFSWKDTLQTLRQRAENDDPDPHDGYSLSYVNPATGQPPLFPTMSFRAQLLQEETDPHFHNAVDAYFVIEGEGATHVGDDVLEWSERDIFVIPPDEIHHHDPDGEAILLGMTDRPVFEAFNFYAEAEP</sequence>
<gene>
    <name type="primary">gdoA</name>
</gene>
<dbReference type="EC" id="1.13.11.4"/>
<dbReference type="EMBL" id="AF069949">
    <property type="protein sequence ID" value="AAC25761.1"/>
    <property type="status" value="ALT_FRAME"/>
    <property type="molecule type" value="Genomic_DNA"/>
</dbReference>
<dbReference type="EMBL" id="AY297456">
    <property type="protein sequence ID" value="AAQ62856.1"/>
    <property type="molecule type" value="Genomic_DNA"/>
</dbReference>
<dbReference type="SMR" id="Q330M9"/>
<dbReference type="BioCyc" id="MetaCyc:MONOMER-10867"/>
<dbReference type="BRENDA" id="1.13.11.4">
    <property type="organism ID" value="2567"/>
</dbReference>
<dbReference type="UniPathway" id="UPA00082"/>
<dbReference type="GO" id="GO:0047922">
    <property type="term" value="F:gentisate 1,2-dioxygenase activity"/>
    <property type="evidence" value="ECO:0007669"/>
    <property type="project" value="UniProtKB-EC"/>
</dbReference>
<dbReference type="GO" id="GO:0009056">
    <property type="term" value="P:catabolic process"/>
    <property type="evidence" value="ECO:0007669"/>
    <property type="project" value="UniProtKB-KW"/>
</dbReference>
<dbReference type="CDD" id="cd02216">
    <property type="entry name" value="cupin_GDO-like_N"/>
    <property type="match status" value="1"/>
</dbReference>
<dbReference type="Gene3D" id="2.60.120.10">
    <property type="entry name" value="Jelly Rolls"/>
    <property type="match status" value="1"/>
</dbReference>
<dbReference type="InterPro" id="IPR006045">
    <property type="entry name" value="Cupin_1"/>
</dbReference>
<dbReference type="InterPro" id="IPR013096">
    <property type="entry name" value="Cupin_2"/>
</dbReference>
<dbReference type="InterPro" id="IPR047183">
    <property type="entry name" value="GDO-like"/>
</dbReference>
<dbReference type="InterPro" id="IPR014710">
    <property type="entry name" value="RmlC-like_jellyroll"/>
</dbReference>
<dbReference type="InterPro" id="IPR011051">
    <property type="entry name" value="RmlC_Cupin_sf"/>
</dbReference>
<dbReference type="PANTHER" id="PTHR41517">
    <property type="entry name" value="1,2-DIOXYGENASE PROTEIN-RELATED"/>
    <property type="match status" value="1"/>
</dbReference>
<dbReference type="PANTHER" id="PTHR41517:SF1">
    <property type="entry name" value="CUPIN"/>
    <property type="match status" value="1"/>
</dbReference>
<dbReference type="Pfam" id="PF07883">
    <property type="entry name" value="Cupin_2"/>
    <property type="match status" value="2"/>
</dbReference>
<dbReference type="SMART" id="SM00835">
    <property type="entry name" value="Cupin_1"/>
    <property type="match status" value="1"/>
</dbReference>
<dbReference type="SUPFAM" id="SSF51182">
    <property type="entry name" value="RmlC-like cupins"/>
    <property type="match status" value="1"/>
</dbReference>
<evidence type="ECO:0000255" key="1"/>
<evidence type="ECO:0000269" key="2">
    <source>
    </source>
</evidence>
<evidence type="ECO:0000269" key="3">
    <source>
    </source>
</evidence>
<evidence type="ECO:0000269" key="4">
    <source>
    </source>
</evidence>
<evidence type="ECO:0000305" key="5"/>
<proteinExistence type="evidence at protein level"/>
<accession>Q330M9</accession>
<accession>O73956</accession>
<feature type="initiator methionine" description="Removed" evidence="4">
    <location>
        <position position="1"/>
    </location>
</feature>
<feature type="chain" id="PRO_0000428927" description="Gentisate 1,2-dioxygenase">
    <location>
        <begin position="2"/>
        <end position="358"/>
    </location>
</feature>
<feature type="domain" description="Cupin type-1" evidence="1">
    <location>
        <begin position="239"/>
        <end position="358"/>
    </location>
</feature>
<keyword id="KW-0058">Aromatic hydrocarbons catabolism</keyword>
<keyword id="KW-0223">Dioxygenase</keyword>
<keyword id="KW-0903">Direct protein sequencing</keyword>
<keyword id="KW-0560">Oxidoreductase</keyword>
<comment type="function">
    <text evidence="2 3 4">Catalyzes the oxygen-dependent ring fission of gentisate between the carboxyl and proximal hydroxyl groups at positions 1 and 2 of the aromatic ring to form maleylpyruvate. No activity with cathechol and protecatechuate as substrates. Part of a 3-hydroxybenzoic acid-degradation pathway.</text>
</comment>
<comment type="catalytic activity">
    <reaction evidence="4">
        <text>2,5-dihydroxybenzoate + O2 = 3-maleylpyruvate + H(+)</text>
        <dbReference type="Rhea" id="RHEA:18237"/>
        <dbReference type="ChEBI" id="CHEBI:15378"/>
        <dbReference type="ChEBI" id="CHEBI:15379"/>
        <dbReference type="ChEBI" id="CHEBI:16727"/>
        <dbReference type="ChEBI" id="CHEBI:58044"/>
        <dbReference type="EC" id="1.13.11.4"/>
    </reaction>
</comment>
<comment type="activity regulation">
    <text evidence="2 4">Inhibited by 2,2'-dipyridyl.</text>
</comment>
<comment type="biophysicochemical properties">
    <kinetics>
        <KM evidence="4">95 uM for gentisic acid</KM>
        <Vmax evidence="4">187.0 umol/min/mg enzyme toward gentisate</Vmax>
        <text>Highest activity in the presence of 2 M KCl or NaCl. 60% loss of activity in the presence of 1.5 M KCl.</text>
    </kinetics>
    <phDependence>
        <text evidence="4">Optimum pH is 7.2.</text>
    </phDependence>
    <temperatureDependence>
        <text evidence="4">Optimum temperature is 45 degrees Celsius.</text>
    </temperatureDependence>
</comment>
<comment type="pathway">
    <text>Aromatic compound metabolism; naphthalene degradation.</text>
</comment>
<comment type="subunit">
    <text evidence="4">Homotetramer.</text>
</comment>
<comment type="induction">
    <text evidence="3">Up-regulated in cells grown on benzoic acid, 3-hydroxybenzoic acid, phenylpropionic acid or cinnamic acid, but not in cell grown on pyruvic acid.</text>
</comment>
<comment type="similarity">
    <text evidence="5">Belongs to the gentisate 1,2-dioxygenase family.</text>
</comment>
<comment type="sequence caution" evidence="5">
    <conflict type="erroneous initiation">
        <sequence resource="EMBL-CDS" id="AAC25761"/>
    </conflict>
    <text>Extended N-terminus.</text>
</comment>
<comment type="sequence caution" evidence="5">
    <conflict type="frameshift">
        <sequence resource="EMBL-CDS" id="AAC25761"/>
    </conflict>
</comment>
<reference key="1">
    <citation type="journal article" date="1998" name="Extremophiles">
        <title>Gentisate 1,2-dioxygenase from Haloferax sp. D1227.</title>
        <authorList>
            <person name="Fu W."/>
            <person name="Oriel P."/>
        </authorList>
    </citation>
    <scope>NUCLEOTIDE SEQUENCE [GENOMIC DNA]</scope>
    <scope>PROTEIN SEQUENCE OF 2-41 AND 76-85</scope>
    <scope>FUNCTION</scope>
    <scope>CATALYTIC ACTIVITY</scope>
    <scope>SUBUNIT</scope>
    <scope>BIOPHYSICOCHEMICAL PROPERTIES</scope>
    <scope>ACTIVITY REGULATION</scope>
    <source>
        <strain>D1227 / ATCC 51408</strain>
    </source>
</reference>
<reference key="2">
    <citation type="journal article" date="2006" name="Appl. Microbiol. Biotechnol.">
        <title>Expression of gentisate 1,2-dioxygenase (gdoA) genes involved in aromatic degradation in two haloarchaeal genera.</title>
        <authorList>
            <person name="Fairley D.J."/>
            <person name="Wang G."/>
            <person name="Rensing C."/>
            <person name="Pepper I.L."/>
            <person name="Larkin M.J."/>
        </authorList>
    </citation>
    <scope>NUCLEOTIDE SEQUENCE [GENOMIC RNA]</scope>
    <scope>FUNCTION</scope>
    <scope>INDUCTION</scope>
    <source>
        <strain>D1227 / ATCC 51408</strain>
    </source>
</reference>
<reference key="3">
    <citation type="journal article" date="1999" name="Extremophiles">
        <title>Degradation of 3-phenylpropionic acid by Haloferax sp. D1227.</title>
        <authorList>
            <person name="Fu W."/>
            <person name="Oriel P."/>
        </authorList>
    </citation>
    <scope>FUNCTION</scope>
    <scope>ACTIVITY REGULATION</scope>
    <source>
        <strain>D1227 / ATCC 51408</strain>
    </source>
</reference>
<name>GNTDO_HALSB</name>